<gene>
    <name evidence="1" type="primary">mdtJ</name>
    <name type="ordered locus">SeSA_A1583</name>
</gene>
<dbReference type="EMBL" id="CP001127">
    <property type="protein sequence ID" value="ACF91835.1"/>
    <property type="molecule type" value="Genomic_DNA"/>
</dbReference>
<dbReference type="RefSeq" id="WP_000500279.1">
    <property type="nucleotide sequence ID" value="NC_011094.1"/>
</dbReference>
<dbReference type="SMR" id="B4TVE8"/>
<dbReference type="KEGG" id="sew:SeSA_A1583"/>
<dbReference type="HOGENOM" id="CLU_133067_0_0_6"/>
<dbReference type="Proteomes" id="UP000001865">
    <property type="component" value="Chromosome"/>
</dbReference>
<dbReference type="GO" id="GO:0005886">
    <property type="term" value="C:plasma membrane"/>
    <property type="evidence" value="ECO:0007669"/>
    <property type="project" value="UniProtKB-SubCell"/>
</dbReference>
<dbReference type="GO" id="GO:0015199">
    <property type="term" value="F:amino-acid betaine transmembrane transporter activity"/>
    <property type="evidence" value="ECO:0007669"/>
    <property type="project" value="TreeGrafter"/>
</dbReference>
<dbReference type="GO" id="GO:0015297">
    <property type="term" value="F:antiporter activity"/>
    <property type="evidence" value="ECO:0007669"/>
    <property type="project" value="TreeGrafter"/>
</dbReference>
<dbReference type="GO" id="GO:0015220">
    <property type="term" value="F:choline transmembrane transporter activity"/>
    <property type="evidence" value="ECO:0007669"/>
    <property type="project" value="TreeGrafter"/>
</dbReference>
<dbReference type="GO" id="GO:0015606">
    <property type="term" value="F:spermidine transmembrane transporter activity"/>
    <property type="evidence" value="ECO:0007669"/>
    <property type="project" value="UniProtKB-UniRule"/>
</dbReference>
<dbReference type="GO" id="GO:0031460">
    <property type="term" value="P:glycine betaine transport"/>
    <property type="evidence" value="ECO:0007669"/>
    <property type="project" value="TreeGrafter"/>
</dbReference>
<dbReference type="FunFam" id="1.10.3730.20:FF:000001">
    <property type="entry name" value="Quaternary ammonium compound resistance transporter SugE"/>
    <property type="match status" value="1"/>
</dbReference>
<dbReference type="Gene3D" id="1.10.3730.20">
    <property type="match status" value="1"/>
</dbReference>
<dbReference type="HAMAP" id="MF_01598">
    <property type="entry name" value="MdtJ"/>
    <property type="match status" value="1"/>
</dbReference>
<dbReference type="InterPro" id="IPR000390">
    <property type="entry name" value="Small_drug/metabolite_transptr"/>
</dbReference>
<dbReference type="InterPro" id="IPR045324">
    <property type="entry name" value="Small_multidrug_res"/>
</dbReference>
<dbReference type="InterPro" id="IPR023740">
    <property type="entry name" value="Spermidine_export_MdtJ"/>
</dbReference>
<dbReference type="NCBIfam" id="NF007767">
    <property type="entry name" value="PRK10452.1"/>
    <property type="match status" value="1"/>
</dbReference>
<dbReference type="PANTHER" id="PTHR30561">
    <property type="entry name" value="SMR FAMILY PROTON-DEPENDENT DRUG EFFLUX TRANSPORTER SUGE"/>
    <property type="match status" value="1"/>
</dbReference>
<dbReference type="PANTHER" id="PTHR30561:SF2">
    <property type="entry name" value="SPERMIDINE EXPORT PROTEIN MDTJ"/>
    <property type="match status" value="1"/>
</dbReference>
<dbReference type="Pfam" id="PF00893">
    <property type="entry name" value="Multi_Drug_Res"/>
    <property type="match status" value="1"/>
</dbReference>
<dbReference type="SUPFAM" id="SSF103481">
    <property type="entry name" value="Multidrug resistance efflux transporter EmrE"/>
    <property type="match status" value="1"/>
</dbReference>
<organism>
    <name type="scientific">Salmonella schwarzengrund (strain CVM19633)</name>
    <dbReference type="NCBI Taxonomy" id="439843"/>
    <lineage>
        <taxon>Bacteria</taxon>
        <taxon>Pseudomonadati</taxon>
        <taxon>Pseudomonadota</taxon>
        <taxon>Gammaproteobacteria</taxon>
        <taxon>Enterobacterales</taxon>
        <taxon>Enterobacteriaceae</taxon>
        <taxon>Salmonella</taxon>
    </lineage>
</organism>
<reference key="1">
    <citation type="journal article" date="2011" name="J. Bacteriol.">
        <title>Comparative genomics of 28 Salmonella enterica isolates: evidence for CRISPR-mediated adaptive sublineage evolution.</title>
        <authorList>
            <person name="Fricke W.F."/>
            <person name="Mammel M.K."/>
            <person name="McDermott P.F."/>
            <person name="Tartera C."/>
            <person name="White D.G."/>
            <person name="Leclerc J.E."/>
            <person name="Ravel J."/>
            <person name="Cebula T.A."/>
        </authorList>
    </citation>
    <scope>NUCLEOTIDE SEQUENCE [LARGE SCALE GENOMIC DNA]</scope>
    <source>
        <strain>CVM19633</strain>
    </source>
</reference>
<name>MDTJ_SALSV</name>
<sequence length="120" mass="12813">MFYWILLALAIATEITGTLSMKWASVGNGNAGFILMLVMITLSYIFLSFAVKKIALGVAYALWEGIGILFITIFSVLLFDEALSTMKIAGLLTLVAGIVLIKSGTRKPGKPVKGAARATI</sequence>
<feature type="chain" id="PRO_1000197341" description="Spermidine export protein MdtJ">
    <location>
        <begin position="1"/>
        <end position="120"/>
    </location>
</feature>
<feature type="transmembrane region" description="Helical" evidence="1">
    <location>
        <begin position="1"/>
        <end position="21"/>
    </location>
</feature>
<feature type="transmembrane region" description="Helical" evidence="1">
    <location>
        <begin position="31"/>
        <end position="51"/>
    </location>
</feature>
<feature type="transmembrane region" description="Helical" evidence="1">
    <location>
        <begin position="54"/>
        <end position="74"/>
    </location>
</feature>
<feature type="transmembrane region" description="Helical" evidence="1">
    <location>
        <begin position="81"/>
        <end position="101"/>
    </location>
</feature>
<accession>B4TVE8</accession>
<protein>
    <recommendedName>
        <fullName evidence="1">Spermidine export protein MdtJ</fullName>
    </recommendedName>
</protein>
<keyword id="KW-0997">Cell inner membrane</keyword>
<keyword id="KW-1003">Cell membrane</keyword>
<keyword id="KW-0472">Membrane</keyword>
<keyword id="KW-0812">Transmembrane</keyword>
<keyword id="KW-1133">Transmembrane helix</keyword>
<keyword id="KW-0813">Transport</keyword>
<proteinExistence type="inferred from homology"/>
<comment type="function">
    <text evidence="1">Catalyzes the excretion of spermidine.</text>
</comment>
<comment type="subunit">
    <text evidence="1">Forms a complex with MdtI.</text>
</comment>
<comment type="subcellular location">
    <subcellularLocation>
        <location evidence="1">Cell inner membrane</location>
        <topology evidence="1">Multi-pass membrane protein</topology>
    </subcellularLocation>
</comment>
<comment type="similarity">
    <text evidence="1">Belongs to the drug/metabolite transporter (DMT) superfamily. Small multidrug resistance (SMR) (TC 2.A.7.1) family. MdtJ subfamily.</text>
</comment>
<evidence type="ECO:0000255" key="1">
    <source>
        <dbReference type="HAMAP-Rule" id="MF_01598"/>
    </source>
</evidence>